<proteinExistence type="inferred from homology"/>
<sequence length="175" mass="19238">MLPAYLSNPFAAVFGGGKPIDGGRTYKDGRRILGDGKTYRGLFSGIFCGFIAGCIEIWLSSRGFEIMGINMPVFGPDYKSALIVVLALASGALFGDMFKSFFKRRMGLKRGASLPLVDQLDFVVGAWVFTYLVAPEWFVSNFTHGIMLTVIIITPLLHLTTNIIGYLIGVKKEPW</sequence>
<keyword id="KW-1003">Cell membrane</keyword>
<keyword id="KW-0444">Lipid biosynthesis</keyword>
<keyword id="KW-0443">Lipid metabolism</keyword>
<keyword id="KW-0460">Magnesium</keyword>
<keyword id="KW-0472">Membrane</keyword>
<keyword id="KW-0594">Phospholipid biosynthesis</keyword>
<keyword id="KW-1208">Phospholipid metabolism</keyword>
<keyword id="KW-0808">Transferase</keyword>
<keyword id="KW-0812">Transmembrane</keyword>
<keyword id="KW-1133">Transmembrane helix</keyword>
<feature type="chain" id="PRO_0000298280" description="CDP-archaeol synthase">
    <location>
        <begin position="1"/>
        <end position="175"/>
    </location>
</feature>
<feature type="transmembrane region" description="Helical" evidence="1">
    <location>
        <begin position="41"/>
        <end position="61"/>
    </location>
</feature>
<feature type="transmembrane region" description="Helical" evidence="1">
    <location>
        <begin position="82"/>
        <end position="102"/>
    </location>
</feature>
<feature type="transmembrane region" description="Helical" evidence="1">
    <location>
        <begin position="122"/>
        <end position="142"/>
    </location>
</feature>
<feature type="transmembrane region" description="Helical" evidence="1">
    <location>
        <begin position="150"/>
        <end position="170"/>
    </location>
</feature>
<protein>
    <recommendedName>
        <fullName evidence="1">CDP-archaeol synthase</fullName>
        <ecNumber evidence="1">2.7.7.67</ecNumber>
    </recommendedName>
    <alternativeName>
        <fullName evidence="1">CDP-2,3-bis-(O-geranylgeranyl)-sn-glycerol synthase</fullName>
    </alternativeName>
</protein>
<evidence type="ECO:0000255" key="1">
    <source>
        <dbReference type="HAMAP-Rule" id="MF_01117"/>
    </source>
</evidence>
<reference key="1">
    <citation type="journal article" date="2006" name="J. Bacteriol.">
        <title>The Methanosarcina barkeri genome: comparative analysis with Methanosarcina acetivorans and Methanosarcina mazei reveals extensive rearrangement within methanosarcinal genomes.</title>
        <authorList>
            <person name="Maeder D.L."/>
            <person name="Anderson I."/>
            <person name="Brettin T.S."/>
            <person name="Bruce D.C."/>
            <person name="Gilna P."/>
            <person name="Han C.S."/>
            <person name="Lapidus A."/>
            <person name="Metcalf W.W."/>
            <person name="Saunders E."/>
            <person name="Tapia R."/>
            <person name="Sowers K.R."/>
        </authorList>
    </citation>
    <scope>NUCLEOTIDE SEQUENCE [LARGE SCALE GENOMIC DNA]</scope>
    <source>
        <strain>Fusaro / DSM 804</strain>
    </source>
</reference>
<name>CDPAS_METBF</name>
<comment type="function">
    <text evidence="1">Catalyzes the formation of CDP-2,3-bis-(O-geranylgeranyl)-sn-glycerol (CDP-archaeol) from 2,3-bis-(O-geranylgeranyl)-sn-glycerol 1-phosphate (DGGGP) and CTP. This reaction is the third ether-bond-formation step in the biosynthesis of archaeal membrane lipids.</text>
</comment>
<comment type="catalytic activity">
    <reaction evidence="1">
        <text>2,3-bis-O-(geranylgeranyl)-sn-glycerol 1-phosphate + CTP + H(+) = CDP-2,3-bis-O-(geranylgeranyl)-sn-glycerol + diphosphate</text>
        <dbReference type="Rhea" id="RHEA:25690"/>
        <dbReference type="ChEBI" id="CHEBI:15378"/>
        <dbReference type="ChEBI" id="CHEBI:33019"/>
        <dbReference type="ChEBI" id="CHEBI:37563"/>
        <dbReference type="ChEBI" id="CHEBI:58837"/>
        <dbReference type="ChEBI" id="CHEBI:58838"/>
        <dbReference type="EC" id="2.7.7.67"/>
    </reaction>
</comment>
<comment type="cofactor">
    <cofactor evidence="1">
        <name>Mg(2+)</name>
        <dbReference type="ChEBI" id="CHEBI:18420"/>
    </cofactor>
</comment>
<comment type="pathway">
    <text evidence="1">Membrane lipid metabolism; glycerophospholipid metabolism.</text>
</comment>
<comment type="subcellular location">
    <subcellularLocation>
        <location evidence="1">Cell membrane</location>
        <topology evidence="1">Multi-pass membrane protein</topology>
    </subcellularLocation>
</comment>
<comment type="similarity">
    <text evidence="1">Belongs to the CDP-archaeol synthase family.</text>
</comment>
<organism>
    <name type="scientific">Methanosarcina barkeri (strain Fusaro / DSM 804)</name>
    <dbReference type="NCBI Taxonomy" id="269797"/>
    <lineage>
        <taxon>Archaea</taxon>
        <taxon>Methanobacteriati</taxon>
        <taxon>Methanobacteriota</taxon>
        <taxon>Stenosarchaea group</taxon>
        <taxon>Methanomicrobia</taxon>
        <taxon>Methanosarcinales</taxon>
        <taxon>Methanosarcinaceae</taxon>
        <taxon>Methanosarcina</taxon>
    </lineage>
</organism>
<dbReference type="EC" id="2.7.7.67" evidence="1"/>
<dbReference type="EMBL" id="CP000099">
    <property type="protein sequence ID" value="AAZ72386.1"/>
    <property type="molecule type" value="Genomic_DNA"/>
</dbReference>
<dbReference type="SMR" id="Q465Q6"/>
<dbReference type="STRING" id="269797.Mbar_A3516"/>
<dbReference type="PaxDb" id="269797-Mbar_A3516"/>
<dbReference type="KEGG" id="mba:Mbar_A3516"/>
<dbReference type="eggNOG" id="arCOG04106">
    <property type="taxonomic scope" value="Archaea"/>
</dbReference>
<dbReference type="HOGENOM" id="CLU_105710_0_0_2"/>
<dbReference type="UniPathway" id="UPA00940"/>
<dbReference type="GO" id="GO:0005886">
    <property type="term" value="C:plasma membrane"/>
    <property type="evidence" value="ECO:0007669"/>
    <property type="project" value="UniProtKB-SubCell"/>
</dbReference>
<dbReference type="GO" id="GO:0043338">
    <property type="term" value="F:CDP-2,3-bis-(O-geranylgeranyl)-sn-glycerol synthase activity"/>
    <property type="evidence" value="ECO:0007669"/>
    <property type="project" value="UniProtKB-EC"/>
</dbReference>
<dbReference type="GO" id="GO:0046474">
    <property type="term" value="P:glycerophospholipid biosynthetic process"/>
    <property type="evidence" value="ECO:0007669"/>
    <property type="project" value="UniProtKB-UniRule"/>
</dbReference>
<dbReference type="HAMAP" id="MF_01117">
    <property type="entry name" value="CDP_archaeol_synth"/>
    <property type="match status" value="1"/>
</dbReference>
<dbReference type="InterPro" id="IPR032690">
    <property type="entry name" value="CarS"/>
</dbReference>
<dbReference type="InterPro" id="IPR002726">
    <property type="entry name" value="CarS_archaea"/>
</dbReference>
<dbReference type="NCBIfam" id="NF003114">
    <property type="entry name" value="PRK04032.1"/>
    <property type="match status" value="1"/>
</dbReference>
<dbReference type="PANTHER" id="PTHR39650">
    <property type="entry name" value="CDP-ARCHAEOL SYNTHASE"/>
    <property type="match status" value="1"/>
</dbReference>
<dbReference type="PANTHER" id="PTHR39650:SF1">
    <property type="entry name" value="CDP-ARCHAEOL SYNTHASE"/>
    <property type="match status" value="1"/>
</dbReference>
<dbReference type="Pfam" id="PF01864">
    <property type="entry name" value="CarS-like"/>
    <property type="match status" value="1"/>
</dbReference>
<accession>Q465Q6</accession>
<gene>
    <name evidence="1" type="primary">carS</name>
    <name type="ordered locus">Mbar_A3516</name>
</gene>